<proteinExistence type="inferred from homology"/>
<accession>B5FFZ7</accession>
<evidence type="ECO:0000255" key="1">
    <source>
        <dbReference type="HAMAP-Rule" id="MF_00715"/>
    </source>
</evidence>
<protein>
    <recommendedName>
        <fullName evidence="1">Protein SlyX homolog</fullName>
    </recommendedName>
</protein>
<sequence length="74" mass="8487">MTTTIEQLEQKISDLECQMAFQEQTIDELNDALSQQQLLITNMQVQMKFMVGKMKTMDSSNMADASEETPPPHY</sequence>
<gene>
    <name evidence="1" type="primary">slyX</name>
    <name type="ordered locus">VFMJ11_0213</name>
</gene>
<name>SLYX_ALIFM</name>
<reference key="1">
    <citation type="submission" date="2008-08" db="EMBL/GenBank/DDBJ databases">
        <title>Complete sequence of Vibrio fischeri strain MJ11.</title>
        <authorList>
            <person name="Mandel M.J."/>
            <person name="Stabb E.V."/>
            <person name="Ruby E.G."/>
            <person name="Ferriera S."/>
            <person name="Johnson J."/>
            <person name="Kravitz S."/>
            <person name="Beeson K."/>
            <person name="Sutton G."/>
            <person name="Rogers Y.-H."/>
            <person name="Friedman R."/>
            <person name="Frazier M."/>
            <person name="Venter J.C."/>
        </authorList>
    </citation>
    <scope>NUCLEOTIDE SEQUENCE [LARGE SCALE GENOMIC DNA]</scope>
    <source>
        <strain>MJ11</strain>
    </source>
</reference>
<organism>
    <name type="scientific">Aliivibrio fischeri (strain MJ11)</name>
    <name type="common">Vibrio fischeri</name>
    <dbReference type="NCBI Taxonomy" id="388396"/>
    <lineage>
        <taxon>Bacteria</taxon>
        <taxon>Pseudomonadati</taxon>
        <taxon>Pseudomonadota</taxon>
        <taxon>Gammaproteobacteria</taxon>
        <taxon>Vibrionales</taxon>
        <taxon>Vibrionaceae</taxon>
        <taxon>Aliivibrio</taxon>
    </lineage>
</organism>
<comment type="similarity">
    <text evidence="1">Belongs to the SlyX family.</text>
</comment>
<feature type="chain" id="PRO_1000195859" description="Protein SlyX homolog">
    <location>
        <begin position="1"/>
        <end position="74"/>
    </location>
</feature>
<dbReference type="EMBL" id="CP001139">
    <property type="protein sequence ID" value="ACH64979.1"/>
    <property type="molecule type" value="Genomic_DNA"/>
</dbReference>
<dbReference type="RefSeq" id="WP_011261071.1">
    <property type="nucleotide sequence ID" value="NC_011184.1"/>
</dbReference>
<dbReference type="SMR" id="B5FFZ7"/>
<dbReference type="GeneID" id="54162846"/>
<dbReference type="KEGG" id="vfm:VFMJ11_0213"/>
<dbReference type="HOGENOM" id="CLU_180796_4_0_6"/>
<dbReference type="Proteomes" id="UP000001857">
    <property type="component" value="Chromosome I"/>
</dbReference>
<dbReference type="Gene3D" id="1.20.5.300">
    <property type="match status" value="1"/>
</dbReference>
<dbReference type="HAMAP" id="MF_00715">
    <property type="entry name" value="SlyX"/>
    <property type="match status" value="1"/>
</dbReference>
<dbReference type="InterPro" id="IPR007236">
    <property type="entry name" value="SlyX"/>
</dbReference>
<dbReference type="NCBIfam" id="NF003357">
    <property type="entry name" value="PRK04406.1"/>
    <property type="match status" value="1"/>
</dbReference>
<dbReference type="PANTHER" id="PTHR36508">
    <property type="entry name" value="PROTEIN SLYX"/>
    <property type="match status" value="1"/>
</dbReference>
<dbReference type="PANTHER" id="PTHR36508:SF1">
    <property type="entry name" value="PROTEIN SLYX"/>
    <property type="match status" value="1"/>
</dbReference>
<dbReference type="Pfam" id="PF04102">
    <property type="entry name" value="SlyX"/>
    <property type="match status" value="1"/>
</dbReference>